<protein>
    <recommendedName>
        <fullName evidence="1">Deoxyuridine 5'-triphosphate nucleotidohydrolase</fullName>
        <shortName evidence="1">dUTPase</shortName>
        <ecNumber evidence="1">3.6.1.23</ecNumber>
    </recommendedName>
    <alternativeName>
        <fullName evidence="1">dUTP pyrophosphatase</fullName>
    </alternativeName>
</protein>
<evidence type="ECO:0000255" key="1">
    <source>
        <dbReference type="HAMAP-Rule" id="MF_00116"/>
    </source>
</evidence>
<dbReference type="EC" id="3.6.1.23" evidence="1"/>
<dbReference type="EMBL" id="AE017143">
    <property type="protein sequence ID" value="AAP95646.1"/>
    <property type="molecule type" value="Genomic_DNA"/>
</dbReference>
<dbReference type="SMR" id="Q7VN49"/>
<dbReference type="STRING" id="233412.HD_0734"/>
<dbReference type="KEGG" id="hdu:HD_0734"/>
<dbReference type="eggNOG" id="COG0756">
    <property type="taxonomic scope" value="Bacteria"/>
</dbReference>
<dbReference type="HOGENOM" id="CLU_068508_1_1_6"/>
<dbReference type="UniPathway" id="UPA00610">
    <property type="reaction ID" value="UER00666"/>
</dbReference>
<dbReference type="Proteomes" id="UP000001022">
    <property type="component" value="Chromosome"/>
</dbReference>
<dbReference type="GO" id="GO:0004170">
    <property type="term" value="F:dUTP diphosphatase activity"/>
    <property type="evidence" value="ECO:0007669"/>
    <property type="project" value="UniProtKB-UniRule"/>
</dbReference>
<dbReference type="GO" id="GO:0000287">
    <property type="term" value="F:magnesium ion binding"/>
    <property type="evidence" value="ECO:0007669"/>
    <property type="project" value="UniProtKB-UniRule"/>
</dbReference>
<dbReference type="GO" id="GO:0006226">
    <property type="term" value="P:dUMP biosynthetic process"/>
    <property type="evidence" value="ECO:0007669"/>
    <property type="project" value="UniProtKB-UniRule"/>
</dbReference>
<dbReference type="GO" id="GO:0046081">
    <property type="term" value="P:dUTP catabolic process"/>
    <property type="evidence" value="ECO:0007669"/>
    <property type="project" value="InterPro"/>
</dbReference>
<dbReference type="CDD" id="cd07557">
    <property type="entry name" value="trimeric_dUTPase"/>
    <property type="match status" value="1"/>
</dbReference>
<dbReference type="FunFam" id="2.70.40.10:FF:000002">
    <property type="entry name" value="dUTP diphosphatase"/>
    <property type="match status" value="1"/>
</dbReference>
<dbReference type="Gene3D" id="2.70.40.10">
    <property type="match status" value="1"/>
</dbReference>
<dbReference type="HAMAP" id="MF_00116">
    <property type="entry name" value="dUTPase_bact"/>
    <property type="match status" value="1"/>
</dbReference>
<dbReference type="InterPro" id="IPR008181">
    <property type="entry name" value="dUTPase"/>
</dbReference>
<dbReference type="InterPro" id="IPR029054">
    <property type="entry name" value="dUTPase-like"/>
</dbReference>
<dbReference type="InterPro" id="IPR036157">
    <property type="entry name" value="dUTPase-like_sf"/>
</dbReference>
<dbReference type="InterPro" id="IPR033704">
    <property type="entry name" value="dUTPase_trimeric"/>
</dbReference>
<dbReference type="NCBIfam" id="TIGR00576">
    <property type="entry name" value="dut"/>
    <property type="match status" value="1"/>
</dbReference>
<dbReference type="NCBIfam" id="NF001862">
    <property type="entry name" value="PRK00601.1"/>
    <property type="match status" value="1"/>
</dbReference>
<dbReference type="PANTHER" id="PTHR11241">
    <property type="entry name" value="DEOXYURIDINE 5'-TRIPHOSPHATE NUCLEOTIDOHYDROLASE"/>
    <property type="match status" value="1"/>
</dbReference>
<dbReference type="PANTHER" id="PTHR11241:SF0">
    <property type="entry name" value="DEOXYURIDINE 5'-TRIPHOSPHATE NUCLEOTIDOHYDROLASE"/>
    <property type="match status" value="1"/>
</dbReference>
<dbReference type="Pfam" id="PF00692">
    <property type="entry name" value="dUTPase"/>
    <property type="match status" value="1"/>
</dbReference>
<dbReference type="SUPFAM" id="SSF51283">
    <property type="entry name" value="dUTPase-like"/>
    <property type="match status" value="1"/>
</dbReference>
<accession>Q7VN49</accession>
<gene>
    <name evidence="1" type="primary">dut</name>
    <name type="ordered locus">HD_0734</name>
</gene>
<comment type="function">
    <text evidence="1">This enzyme is involved in nucleotide metabolism: it produces dUMP, the immediate precursor of thymidine nucleotides and it decreases the intracellular concentration of dUTP so that uracil cannot be incorporated into DNA.</text>
</comment>
<comment type="catalytic activity">
    <reaction evidence="1">
        <text>dUTP + H2O = dUMP + diphosphate + H(+)</text>
        <dbReference type="Rhea" id="RHEA:10248"/>
        <dbReference type="ChEBI" id="CHEBI:15377"/>
        <dbReference type="ChEBI" id="CHEBI:15378"/>
        <dbReference type="ChEBI" id="CHEBI:33019"/>
        <dbReference type="ChEBI" id="CHEBI:61555"/>
        <dbReference type="ChEBI" id="CHEBI:246422"/>
        <dbReference type="EC" id="3.6.1.23"/>
    </reaction>
</comment>
<comment type="cofactor">
    <cofactor evidence="1">
        <name>Mg(2+)</name>
        <dbReference type="ChEBI" id="CHEBI:18420"/>
    </cofactor>
</comment>
<comment type="pathway">
    <text evidence="1">Pyrimidine metabolism; dUMP biosynthesis; dUMP from dCTP (dUTP route): step 2/2.</text>
</comment>
<comment type="similarity">
    <text evidence="1">Belongs to the dUTPase family.</text>
</comment>
<keyword id="KW-0378">Hydrolase</keyword>
<keyword id="KW-0460">Magnesium</keyword>
<keyword id="KW-0479">Metal-binding</keyword>
<keyword id="KW-0546">Nucleotide metabolism</keyword>
<keyword id="KW-1185">Reference proteome</keyword>
<sequence>MMKHIDLKILDNRIGREFPLPTYATTGSAGLDLRALIDSAITVEAGQTVLIPTGISVYIADPNLAAVILPRSGLGHKNGIVLGNLVGLIDSDYQGPLMVSIWNRSDKPFTIEVGDRIAQLVFVPVVQASFNIVTDFEQTSRGEGGFGHSGKQ</sequence>
<proteinExistence type="inferred from homology"/>
<reference key="1">
    <citation type="submission" date="2003-06" db="EMBL/GenBank/DDBJ databases">
        <title>The complete genome sequence of Haemophilus ducreyi.</title>
        <authorList>
            <person name="Munson R.S. Jr."/>
            <person name="Ray W.C."/>
            <person name="Mahairas G."/>
            <person name="Sabo P."/>
            <person name="Mungur R."/>
            <person name="Johnson L."/>
            <person name="Nguyen D."/>
            <person name="Wang J."/>
            <person name="Forst C."/>
            <person name="Hood L."/>
        </authorList>
    </citation>
    <scope>NUCLEOTIDE SEQUENCE [LARGE SCALE GENOMIC DNA]</scope>
    <source>
        <strain>35000HP / ATCC 700724</strain>
    </source>
</reference>
<feature type="chain" id="PRO_0000182866" description="Deoxyuridine 5'-triphosphate nucleotidohydrolase">
    <location>
        <begin position="1"/>
        <end position="152"/>
    </location>
</feature>
<feature type="binding site" evidence="1">
    <location>
        <begin position="71"/>
        <end position="73"/>
    </location>
    <ligand>
        <name>substrate</name>
    </ligand>
</feature>
<feature type="binding site" evidence="1">
    <location>
        <position position="84"/>
    </location>
    <ligand>
        <name>substrate</name>
    </ligand>
</feature>
<feature type="binding site" evidence="1">
    <location>
        <begin position="88"/>
        <end position="90"/>
    </location>
    <ligand>
        <name>substrate</name>
    </ligand>
</feature>
<feature type="binding site" evidence="1">
    <location>
        <position position="98"/>
    </location>
    <ligand>
        <name>substrate</name>
    </ligand>
</feature>
<name>DUT_HAEDU</name>
<organism>
    <name type="scientific">Haemophilus ducreyi (strain 35000HP / ATCC 700724)</name>
    <dbReference type="NCBI Taxonomy" id="233412"/>
    <lineage>
        <taxon>Bacteria</taxon>
        <taxon>Pseudomonadati</taxon>
        <taxon>Pseudomonadota</taxon>
        <taxon>Gammaproteobacteria</taxon>
        <taxon>Pasteurellales</taxon>
        <taxon>Pasteurellaceae</taxon>
        <taxon>Haemophilus</taxon>
    </lineage>
</organism>